<gene>
    <name type="primary">EPG5</name>
    <name type="synonym">KIAA1632</name>
</gene>
<organism>
    <name type="scientific">Homo sapiens</name>
    <name type="common">Human</name>
    <dbReference type="NCBI Taxonomy" id="9606"/>
    <lineage>
        <taxon>Eukaryota</taxon>
        <taxon>Metazoa</taxon>
        <taxon>Chordata</taxon>
        <taxon>Craniata</taxon>
        <taxon>Vertebrata</taxon>
        <taxon>Euteleostomi</taxon>
        <taxon>Mammalia</taxon>
        <taxon>Eutheria</taxon>
        <taxon>Euarchontoglires</taxon>
        <taxon>Primates</taxon>
        <taxon>Haplorrhini</taxon>
        <taxon>Catarrhini</taxon>
        <taxon>Hominidae</taxon>
        <taxon>Homo</taxon>
    </lineage>
</organism>
<sequence>MAEAVKPQRRAKAKASRTKTKEKKKYETPQREESSEVSLPKTSREQEIPSLACEFKGDHLKVVTDSQLQDDASGQNESEMFDVPLTSLTISNEESLTCNTEPPKEGGEARPCVGDSAVTPKVHPGDNVGTKVETPKNFTEVEENMSVQGGLSESAPQSNFSYTQPAMENIQVRETQNSKEDKQGLVCSSEVPQNVGLQSSCPAKHGFQTPRVKKLYPQLPAEIAGEAPALVAVKPLLRSERLYPELPSQLELVPFTKEQLKILEPGSWLENVESYLEEFDSMAHQDRHEFYELLLNYSRCRKQLLLAEAELLTLTSDCQNAKSRLWQFKEEQMSVQGICADQVKVFSYHRYQRVEMNENALVELKKLFDAKSEHLHQTLALHSYTSVLSRLQVESYIYALLSSSAVLRSSAIHQQGRASKQTESIPSDLCQLKECISVLFMFTRRVNEDTQFHDDILLWLQKLVSVLQRVGCPGDHLFLLNHILRCPAGVSKWAVPFIQIKVLHNPSGVFHFMQSLALLMSPVKNRAEFMCHMKPSERKPSSSGPGSGTWTLVDEGGEEDEDPETSWILLNEDDLVTILAQFPFHELFQHLLGFKAKGDYLPETTRPQEMMKIFAFANSLVELLAVGLETFNRARYRQFVKRIGYMIRMTLGYVSDHWAQYVSHNQGSGLAQQPYSMEKLQVEFDELFLRAVLHVLKAKRLGIWLFMSEMPFGTLSVQMLWKLFYLMHQVESENLQQLSSSLQPAQCKQQLQDPEHFTNFEKCLSSMNSSEEICLLTTFAQMAQARRTNVDEDFIKIIVLEIYEVSYVTLSTRETFSKVGRELLGTITAVHPEIISVLLDRVQETIDQVGMVSLYLFKELPLYLWQPSASEIAVIRDWLLNYNLTVVKNKLACVILEGLNWGFAKQATLHLDQAVHAEVALMVLEAYQKYLAQKPYAGILSESMKQVSYLASIVRYGETPETSFNQWAWNLILRLKLHKNDYGIQPNCPAVPFSVTVPDMTESPTFHPLLKAVKAGMPIGCYLALSMTAVGHSIEKFCAEGIPLLGILVQSRHLRTVVHVLDKILPLFYPCQYYLLKNEQFLSHLLLFLHLDSGVPQGVTQQVTHKVAQHLTGASHGDNVKLLNSMIQAHISVSTQPNEVGPVAVLEFWVQALISQHLWYREQPILFLMDHLCKAAFQLMQEDCIQKLLYQQHKNALGYHCDRSLLSSLVSWIVAGNITPSFVEGLATPTQVWFAWTVLNMESIFEEDSQLRRVIEGELVINSAFTPDQALKKAQTQLKLPIVPSLQRLLIYRWAHQALVTPSDHPLLPLIWQKFFLLYLHRPGPQYGLPIDGCIGRRFFQSPAHINLLKEMKRRLTEVADFHHAASKALRVPAEGSEGLPESHSGTPGYLTSPELHKELVRLFNVYILWLEDENFQKGDTYIPSLPKHYDIHRLAKVMQNQQDLWMEYLNMERIYHEFQETVGLWTQAKLESHSTPCSLSVQLDFTDPLLAKERVLSNLRKHEAPQPPLALHPTKPPVPVISSAVLLSQKDATQLVCTDLNLLQQQARTAALRESQQVALDGELLDTMPKQYVNREEQTTLHLECRGSSGKKCQGAAVVTVQFEGMHKNEAISQQLHVLRKEVKQLQAEAAKPPSLNIVEAAVHAENLITALVNAYKLQPTPGIQKVGISLFFTIVDYVSDETQRHPPTRQFFTSCIEILGQVFISGIKSECRKVLETILKNSRLCSLLSPFFTPNAAPAEFIQLYEQVVKFLSEDNSDMIFMLLTKFDLKQWLSATKPPLSDRTRLLESIHLALTAWGLEPDEDILMPFNLFCKHWTYLLLYQFPDQYSDILRLLMQSSAEQLLSPECWKATLRALGCCAPSCQQGAASTEGAVLPSSSDALLSDKQVMETIQWLSDFFYKLRLSKMDFKSFGLFSKWSPYMADVKTFLGYLVKRLIDLEMTCLAQDPTASRKTVLKSLHSVIIQLFKPWILVLEDNESSQQRHYPWLESDTVVASSIVQLFTDCIDSLHESFKDKLLPGDAGALWLHLMHYCEACTAPKMPEFILYAFHSTYRKLPWKDLHPDQMLMEAFFKVERGSPKSCFLFLGSVLCEVNWVSVLSDAWNSSPHPETRSMIVCLLFMMILLAKEVQLVDQTDSPLLSLLGQTSSLSWHLVDIVSYQSVLSYFSSHYPPSIILAKESYAELIMKLLKVSAGLSIPTDSQKHLDAVPKCQAFTHQMVQFLSTLEQNGKITLAVLEQEMSKLLDDIIVFNPPDMDSQTRHMALSSLFMEVLMMMNNATIPTAEFLRGSIRTWIGQKMHGLVVLPLLTAACQSLASVRHMAETTEACITAYFKESPLNQNSGWGPILVSLQVPELTMEEFLQECLTLGSYLTLYVYLLQCLNSEQTLRNEMKVLLILSKWLEQVYPSSVEEEAKLFLWWHQVLQLSLIQTEQNDSVLTESVIRILLLVQSRQNLVAEERLSSGILGAIGFGRKSPLSNRFRVVARSMAAFLSVQVPMEDQIRLRPGSELHLTPKAQQALNALESMASSKQYVEYQDQILQATQFIRHPGHCLQDGKSFLALLVNCLYPEVHYLDHIR</sequence>
<protein>
    <recommendedName>
        <fullName>Ectopic P granules protein 5 homolog</fullName>
    </recommendedName>
</protein>
<keyword id="KW-0002">3D-structure</keyword>
<keyword id="KW-0025">Alternative splicing</keyword>
<keyword id="KW-0072">Autophagy</keyword>
<keyword id="KW-0898">Cataract</keyword>
<keyword id="KW-0175">Coiled coil</keyword>
<keyword id="KW-0963">Cytoplasm</keyword>
<keyword id="KW-0225">Disease variant</keyword>
<keyword id="KW-0458">Lysosome</keyword>
<keyword id="KW-0597">Phosphoprotein</keyword>
<keyword id="KW-1267">Proteomics identification</keyword>
<keyword id="KW-1185">Reference proteome</keyword>
<dbReference type="EMBL" id="AC087685">
    <property type="status" value="NOT_ANNOTATED_CDS"/>
    <property type="molecule type" value="Genomic_DNA"/>
</dbReference>
<dbReference type="EMBL" id="AC090355">
    <property type="status" value="NOT_ANNOTATED_CDS"/>
    <property type="molecule type" value="Genomic_DNA"/>
</dbReference>
<dbReference type="EMBL" id="AB046852">
    <property type="protein sequence ID" value="BAB13458.1"/>
    <property type="status" value="ALT_INIT"/>
    <property type="molecule type" value="mRNA"/>
</dbReference>
<dbReference type="EMBL" id="AK023817">
    <property type="protein sequence ID" value="BAB14689.1"/>
    <property type="status" value="ALT_SEQ"/>
    <property type="molecule type" value="mRNA"/>
</dbReference>
<dbReference type="EMBL" id="BC130614">
    <property type="protein sequence ID" value="AAI30615.1"/>
    <property type="molecule type" value="mRNA"/>
</dbReference>
<dbReference type="CCDS" id="CCDS11926.2">
    <molecule id="Q9HCE0-1"/>
</dbReference>
<dbReference type="RefSeq" id="NP_066015.2">
    <molecule id="Q9HCE0-1"/>
    <property type="nucleotide sequence ID" value="NM_020964.3"/>
</dbReference>
<dbReference type="PDB" id="7JHX">
    <property type="method" value="X-ray"/>
    <property type="resolution" value="1.91 A"/>
    <property type="chains" value="C/D=560-571"/>
</dbReference>
<dbReference type="PDBsum" id="7JHX"/>
<dbReference type="EMDB" id="EMD-44835"/>
<dbReference type="SMR" id="Q9HCE0"/>
<dbReference type="BioGRID" id="121746">
    <property type="interactions" value="14"/>
</dbReference>
<dbReference type="FunCoup" id="Q9HCE0">
    <property type="interactions" value="3663"/>
</dbReference>
<dbReference type="IntAct" id="Q9HCE0">
    <property type="interactions" value="7"/>
</dbReference>
<dbReference type="MINT" id="Q9HCE0"/>
<dbReference type="STRING" id="9606.ENSP00000282041"/>
<dbReference type="GlyConnect" id="2037">
    <property type="glycosylation" value="6 N-Linked glycans (1 site)"/>
</dbReference>
<dbReference type="GlyCosmos" id="Q9HCE0">
    <property type="glycosylation" value="1 site, 12 glycans"/>
</dbReference>
<dbReference type="GlyGen" id="Q9HCE0">
    <property type="glycosylation" value="3 sites, 12 N-linked glycans (1 site), 1 O-linked glycan (1 site)"/>
</dbReference>
<dbReference type="iPTMnet" id="Q9HCE0"/>
<dbReference type="PhosphoSitePlus" id="Q9HCE0"/>
<dbReference type="BioMuta" id="EPG5"/>
<dbReference type="DMDM" id="158705892"/>
<dbReference type="jPOST" id="Q9HCE0"/>
<dbReference type="MassIVE" id="Q9HCE0"/>
<dbReference type="PaxDb" id="9606-ENSP00000282041"/>
<dbReference type="PeptideAtlas" id="Q9HCE0"/>
<dbReference type="ProteomicsDB" id="81681">
    <molecule id="Q9HCE0-1"/>
</dbReference>
<dbReference type="ProteomicsDB" id="81682">
    <molecule id="Q9HCE0-2"/>
</dbReference>
<dbReference type="Pumba" id="Q9HCE0"/>
<dbReference type="Antibodypedia" id="22425">
    <property type="antibodies" value="74 antibodies from 14 providers"/>
</dbReference>
<dbReference type="DNASU" id="57724"/>
<dbReference type="Ensembl" id="ENST00000282041.11">
    <molecule id="Q9HCE0-1"/>
    <property type="protein sequence ID" value="ENSP00000282041.4"/>
    <property type="gene ID" value="ENSG00000152223.16"/>
</dbReference>
<dbReference type="GeneID" id="57724"/>
<dbReference type="KEGG" id="hsa:57724"/>
<dbReference type="MANE-Select" id="ENST00000282041.11">
    <property type="protein sequence ID" value="ENSP00000282041.4"/>
    <property type="RefSeq nucleotide sequence ID" value="NM_020964.3"/>
    <property type="RefSeq protein sequence ID" value="NP_066015.2"/>
</dbReference>
<dbReference type="UCSC" id="uc002lbm.4">
    <molecule id="Q9HCE0-1"/>
    <property type="organism name" value="human"/>
</dbReference>
<dbReference type="AGR" id="HGNC:29331"/>
<dbReference type="CTD" id="57724"/>
<dbReference type="DisGeNET" id="57724"/>
<dbReference type="GeneCards" id="EPG5"/>
<dbReference type="GeneReviews" id="EPG5"/>
<dbReference type="HGNC" id="HGNC:29331">
    <property type="gene designation" value="EPG5"/>
</dbReference>
<dbReference type="HPA" id="ENSG00000152223">
    <property type="expression patterns" value="Low tissue specificity"/>
</dbReference>
<dbReference type="MalaCards" id="EPG5"/>
<dbReference type="MIM" id="242840">
    <property type="type" value="phenotype"/>
</dbReference>
<dbReference type="MIM" id="615068">
    <property type="type" value="gene"/>
</dbReference>
<dbReference type="neXtProt" id="NX_Q9HCE0"/>
<dbReference type="OpenTargets" id="ENSG00000152223"/>
<dbReference type="Orphanet" id="1493">
    <property type="disease" value="Vici syndrome"/>
</dbReference>
<dbReference type="PharmGKB" id="PA134941500"/>
<dbReference type="VEuPathDB" id="HostDB:ENSG00000152223"/>
<dbReference type="eggNOG" id="KOG3622">
    <property type="taxonomic scope" value="Eukaryota"/>
</dbReference>
<dbReference type="GeneTree" id="ENSGT00390000007354"/>
<dbReference type="HOGENOM" id="CLU_000773_0_0_1"/>
<dbReference type="InParanoid" id="Q9HCE0"/>
<dbReference type="OMA" id="LYCYEAE"/>
<dbReference type="OrthoDB" id="75419at2759"/>
<dbReference type="PAN-GO" id="Q9HCE0">
    <property type="GO annotations" value="2 GO annotations based on evolutionary models"/>
</dbReference>
<dbReference type="PhylomeDB" id="Q9HCE0"/>
<dbReference type="TreeFam" id="TF313847"/>
<dbReference type="PathwayCommons" id="Q9HCE0"/>
<dbReference type="SignaLink" id="Q9HCE0"/>
<dbReference type="BioGRID-ORCS" id="57724">
    <property type="hits" value="41 hits in 1166 CRISPR screens"/>
</dbReference>
<dbReference type="ChiTaRS" id="EPG5">
    <property type="organism name" value="human"/>
</dbReference>
<dbReference type="GenomeRNAi" id="57724"/>
<dbReference type="Pharos" id="Q9HCE0">
    <property type="development level" value="Tbio"/>
</dbReference>
<dbReference type="PRO" id="PR:Q9HCE0"/>
<dbReference type="Proteomes" id="UP000005640">
    <property type="component" value="Chromosome 18"/>
</dbReference>
<dbReference type="RNAct" id="Q9HCE0">
    <property type="molecule type" value="protein"/>
</dbReference>
<dbReference type="Bgee" id="ENSG00000152223">
    <property type="expression patterns" value="Expressed in pancreatic ductal cell and 182 other cell types or tissues"/>
</dbReference>
<dbReference type="ExpressionAtlas" id="Q9HCE0">
    <property type="expression patterns" value="baseline and differential"/>
</dbReference>
<dbReference type="GO" id="GO:0005737">
    <property type="term" value="C:cytoplasm"/>
    <property type="evidence" value="ECO:0000318"/>
    <property type="project" value="GO_Central"/>
</dbReference>
<dbReference type="GO" id="GO:0005764">
    <property type="term" value="C:lysosome"/>
    <property type="evidence" value="ECO:0000314"/>
    <property type="project" value="UniProtKB"/>
</dbReference>
<dbReference type="GO" id="GO:0048471">
    <property type="term" value="C:perinuclear region of cytoplasm"/>
    <property type="evidence" value="ECO:0000314"/>
    <property type="project" value="UniProtKB"/>
</dbReference>
<dbReference type="GO" id="GO:0097352">
    <property type="term" value="P:autophagosome maturation"/>
    <property type="evidence" value="ECO:0000318"/>
    <property type="project" value="GO_Central"/>
</dbReference>
<dbReference type="GO" id="GO:1990786">
    <property type="term" value="P:cellular response to dsDNA"/>
    <property type="evidence" value="ECO:0000315"/>
    <property type="project" value="UniProtKB"/>
</dbReference>
<dbReference type="GO" id="GO:0051607">
    <property type="term" value="P:defense response to virus"/>
    <property type="evidence" value="ECO:0007669"/>
    <property type="project" value="Ensembl"/>
</dbReference>
<dbReference type="GO" id="GO:0032456">
    <property type="term" value="P:endocytic recycling"/>
    <property type="evidence" value="ECO:0007669"/>
    <property type="project" value="Ensembl"/>
</dbReference>
<dbReference type="GO" id="GO:0008333">
    <property type="term" value="P:endosome to lysosome transport"/>
    <property type="evidence" value="ECO:0000315"/>
    <property type="project" value="UniProtKB"/>
</dbReference>
<dbReference type="GO" id="GO:0010467">
    <property type="term" value="P:gene expression"/>
    <property type="evidence" value="ECO:0007669"/>
    <property type="project" value="Ensembl"/>
</dbReference>
<dbReference type="GO" id="GO:0048877">
    <property type="term" value="P:homeostasis of number of retina cells"/>
    <property type="evidence" value="ECO:0007669"/>
    <property type="project" value="Ensembl"/>
</dbReference>
<dbReference type="GO" id="GO:0048874">
    <property type="term" value="P:host-mediated regulation of intestinal microbiota composition"/>
    <property type="evidence" value="ECO:0007669"/>
    <property type="project" value="Ensembl"/>
</dbReference>
<dbReference type="GO" id="GO:0070841">
    <property type="term" value="P:inclusion body assembly"/>
    <property type="evidence" value="ECO:0007669"/>
    <property type="project" value="Ensembl"/>
</dbReference>
<dbReference type="GO" id="GO:0006954">
    <property type="term" value="P:inflammatory response"/>
    <property type="evidence" value="ECO:0007669"/>
    <property type="project" value="Ensembl"/>
</dbReference>
<dbReference type="GO" id="GO:0140888">
    <property type="term" value="P:interferon-mediated signaling pathway"/>
    <property type="evidence" value="ECO:0007669"/>
    <property type="project" value="Ensembl"/>
</dbReference>
<dbReference type="GO" id="GO:0098544">
    <property type="term" value="P:maintenance of protein complex location"/>
    <property type="evidence" value="ECO:0007669"/>
    <property type="project" value="Ensembl"/>
</dbReference>
<dbReference type="GO" id="GO:0002385">
    <property type="term" value="P:mucosal immune response"/>
    <property type="evidence" value="ECO:0007669"/>
    <property type="project" value="Ensembl"/>
</dbReference>
<dbReference type="GO" id="GO:0051402">
    <property type="term" value="P:neuron apoptotic process"/>
    <property type="evidence" value="ECO:0007669"/>
    <property type="project" value="Ensembl"/>
</dbReference>
<dbReference type="GO" id="GO:0006862">
    <property type="term" value="P:nucleotide transport"/>
    <property type="evidence" value="ECO:0000315"/>
    <property type="project" value="UniProtKB"/>
</dbReference>
<dbReference type="GO" id="GO:0046530">
    <property type="term" value="P:photoreceptor cell differentiation"/>
    <property type="evidence" value="ECO:0007669"/>
    <property type="project" value="Ensembl"/>
</dbReference>
<dbReference type="GO" id="GO:0140454">
    <property type="term" value="P:protein aggregate center assembly"/>
    <property type="evidence" value="ECO:0007669"/>
    <property type="project" value="Ensembl"/>
</dbReference>
<dbReference type="GO" id="GO:0034342">
    <property type="term" value="P:response to type III interferon"/>
    <property type="evidence" value="ECO:0007669"/>
    <property type="project" value="Ensembl"/>
</dbReference>
<dbReference type="GO" id="GO:0006986">
    <property type="term" value="P:response to unfolded protein"/>
    <property type="evidence" value="ECO:0007669"/>
    <property type="project" value="Ensembl"/>
</dbReference>
<dbReference type="GO" id="GO:0034162">
    <property type="term" value="P:toll-like receptor 9 signaling pathway"/>
    <property type="evidence" value="ECO:0000315"/>
    <property type="project" value="UniProtKB"/>
</dbReference>
<dbReference type="GO" id="GO:0006511">
    <property type="term" value="P:ubiquitin-dependent protein catabolic process"/>
    <property type="evidence" value="ECO:0007669"/>
    <property type="project" value="Ensembl"/>
</dbReference>
<dbReference type="InterPro" id="IPR051436">
    <property type="entry name" value="Autophagy-related_EPG5"/>
</dbReference>
<dbReference type="PANTHER" id="PTHR31139">
    <property type="entry name" value="ECTOPIC P GRANULES PROTEIN 5 HOMOLOG"/>
    <property type="match status" value="1"/>
</dbReference>
<dbReference type="PANTHER" id="PTHR31139:SF4">
    <property type="entry name" value="ECTOPIC P GRANULES PROTEIN 5 HOMOLOG"/>
    <property type="match status" value="1"/>
</dbReference>
<proteinExistence type="evidence at protein level"/>
<reference key="1">
    <citation type="journal article" date="2005" name="Nature">
        <title>DNA sequence and analysis of human chromosome 18.</title>
        <authorList>
            <person name="Nusbaum C."/>
            <person name="Zody M.C."/>
            <person name="Borowsky M.L."/>
            <person name="Kamal M."/>
            <person name="Kodira C.D."/>
            <person name="Taylor T.D."/>
            <person name="Whittaker C.A."/>
            <person name="Chang J.L."/>
            <person name="Cuomo C.A."/>
            <person name="Dewar K."/>
            <person name="FitzGerald M.G."/>
            <person name="Yang X."/>
            <person name="Abouelleil A."/>
            <person name="Allen N.R."/>
            <person name="Anderson S."/>
            <person name="Bloom T."/>
            <person name="Bugalter B."/>
            <person name="Butler J."/>
            <person name="Cook A."/>
            <person name="DeCaprio D."/>
            <person name="Engels R."/>
            <person name="Garber M."/>
            <person name="Gnirke A."/>
            <person name="Hafez N."/>
            <person name="Hall J.L."/>
            <person name="Norman C.H."/>
            <person name="Itoh T."/>
            <person name="Jaffe D.B."/>
            <person name="Kuroki Y."/>
            <person name="Lehoczky J."/>
            <person name="Lui A."/>
            <person name="Macdonald P."/>
            <person name="Mauceli E."/>
            <person name="Mikkelsen T.S."/>
            <person name="Naylor J.W."/>
            <person name="Nicol R."/>
            <person name="Nguyen C."/>
            <person name="Noguchi H."/>
            <person name="O'Leary S.B."/>
            <person name="Piqani B."/>
            <person name="Smith C.L."/>
            <person name="Talamas J.A."/>
            <person name="Topham K."/>
            <person name="Totoki Y."/>
            <person name="Toyoda A."/>
            <person name="Wain H.M."/>
            <person name="Young S.K."/>
            <person name="Zeng Q."/>
            <person name="Zimmer A.R."/>
            <person name="Fujiyama A."/>
            <person name="Hattori M."/>
            <person name="Birren B.W."/>
            <person name="Sakaki Y."/>
            <person name="Lander E.S."/>
        </authorList>
    </citation>
    <scope>NUCLEOTIDE SEQUENCE [LARGE SCALE GENOMIC DNA]</scope>
</reference>
<reference key="2">
    <citation type="journal article" date="2000" name="DNA Res.">
        <title>Prediction of the coding sequences of unidentified human genes. XVIII. The complete sequences of 100 new cDNA clones from brain which code for large proteins in vitro.</title>
        <authorList>
            <person name="Nagase T."/>
            <person name="Kikuno R."/>
            <person name="Nakayama M."/>
            <person name="Hirosawa M."/>
            <person name="Ohara O."/>
        </authorList>
    </citation>
    <scope>NUCLEOTIDE SEQUENCE [LARGE SCALE MRNA] OF 1-1446 (ISOFORMS 1/2)</scope>
    <scope>VARIANT GLU-182</scope>
    <source>
        <tissue>Brain</tissue>
    </source>
</reference>
<reference key="3">
    <citation type="journal article" date="2004" name="Nat. Genet.">
        <title>Complete sequencing and characterization of 21,243 full-length human cDNAs.</title>
        <authorList>
            <person name="Ota T."/>
            <person name="Suzuki Y."/>
            <person name="Nishikawa T."/>
            <person name="Otsuki T."/>
            <person name="Sugiyama T."/>
            <person name="Irie R."/>
            <person name="Wakamatsu A."/>
            <person name="Hayashi K."/>
            <person name="Sato H."/>
            <person name="Nagai K."/>
            <person name="Kimura K."/>
            <person name="Makita H."/>
            <person name="Sekine M."/>
            <person name="Obayashi M."/>
            <person name="Nishi T."/>
            <person name="Shibahara T."/>
            <person name="Tanaka T."/>
            <person name="Ishii S."/>
            <person name="Yamamoto J."/>
            <person name="Saito K."/>
            <person name="Kawai Y."/>
            <person name="Isono Y."/>
            <person name="Nakamura Y."/>
            <person name="Nagahari K."/>
            <person name="Murakami K."/>
            <person name="Yasuda T."/>
            <person name="Iwayanagi T."/>
            <person name="Wagatsuma M."/>
            <person name="Shiratori A."/>
            <person name="Sudo H."/>
            <person name="Hosoiri T."/>
            <person name="Kaku Y."/>
            <person name="Kodaira H."/>
            <person name="Kondo H."/>
            <person name="Sugawara M."/>
            <person name="Takahashi M."/>
            <person name="Kanda K."/>
            <person name="Yokoi T."/>
            <person name="Furuya T."/>
            <person name="Kikkawa E."/>
            <person name="Omura Y."/>
            <person name="Abe K."/>
            <person name="Kamihara K."/>
            <person name="Katsuta N."/>
            <person name="Sato K."/>
            <person name="Tanikawa M."/>
            <person name="Yamazaki M."/>
            <person name="Ninomiya K."/>
            <person name="Ishibashi T."/>
            <person name="Yamashita H."/>
            <person name="Murakawa K."/>
            <person name="Fujimori K."/>
            <person name="Tanai H."/>
            <person name="Kimata M."/>
            <person name="Watanabe M."/>
            <person name="Hiraoka S."/>
            <person name="Chiba Y."/>
            <person name="Ishida S."/>
            <person name="Ono Y."/>
            <person name="Takiguchi S."/>
            <person name="Watanabe S."/>
            <person name="Yosida M."/>
            <person name="Hotuta T."/>
            <person name="Kusano J."/>
            <person name="Kanehori K."/>
            <person name="Takahashi-Fujii A."/>
            <person name="Hara H."/>
            <person name="Tanase T.-O."/>
            <person name="Nomura Y."/>
            <person name="Togiya S."/>
            <person name="Komai F."/>
            <person name="Hara R."/>
            <person name="Takeuchi K."/>
            <person name="Arita M."/>
            <person name="Imose N."/>
            <person name="Musashino K."/>
            <person name="Yuuki H."/>
            <person name="Oshima A."/>
            <person name="Sasaki N."/>
            <person name="Aotsuka S."/>
            <person name="Yoshikawa Y."/>
            <person name="Matsunawa H."/>
            <person name="Ichihara T."/>
            <person name="Shiohata N."/>
            <person name="Sano S."/>
            <person name="Moriya S."/>
            <person name="Momiyama H."/>
            <person name="Satoh N."/>
            <person name="Takami S."/>
            <person name="Terashima Y."/>
            <person name="Suzuki O."/>
            <person name="Nakagawa S."/>
            <person name="Senoh A."/>
            <person name="Mizoguchi H."/>
            <person name="Goto Y."/>
            <person name="Shimizu F."/>
            <person name="Wakebe H."/>
            <person name="Hishigaki H."/>
            <person name="Watanabe T."/>
            <person name="Sugiyama A."/>
            <person name="Takemoto M."/>
            <person name="Kawakami B."/>
            <person name="Yamazaki M."/>
            <person name="Watanabe K."/>
            <person name="Kumagai A."/>
            <person name="Itakura S."/>
            <person name="Fukuzumi Y."/>
            <person name="Fujimori Y."/>
            <person name="Komiyama M."/>
            <person name="Tashiro H."/>
            <person name="Tanigami A."/>
            <person name="Fujiwara T."/>
            <person name="Ono T."/>
            <person name="Yamada K."/>
            <person name="Fujii Y."/>
            <person name="Ozaki K."/>
            <person name="Hirao M."/>
            <person name="Ohmori Y."/>
            <person name="Kawabata A."/>
            <person name="Hikiji T."/>
            <person name="Kobatake N."/>
            <person name="Inagaki H."/>
            <person name="Ikema Y."/>
            <person name="Okamoto S."/>
            <person name="Okitani R."/>
            <person name="Kawakami T."/>
            <person name="Noguchi S."/>
            <person name="Itoh T."/>
            <person name="Shigeta K."/>
            <person name="Senba T."/>
            <person name="Matsumura K."/>
            <person name="Nakajima Y."/>
            <person name="Mizuno T."/>
            <person name="Morinaga M."/>
            <person name="Sasaki M."/>
            <person name="Togashi T."/>
            <person name="Oyama M."/>
            <person name="Hata H."/>
            <person name="Watanabe M."/>
            <person name="Komatsu T."/>
            <person name="Mizushima-Sugano J."/>
            <person name="Satoh T."/>
            <person name="Shirai Y."/>
            <person name="Takahashi Y."/>
            <person name="Nakagawa K."/>
            <person name="Okumura K."/>
            <person name="Nagase T."/>
            <person name="Nomura N."/>
            <person name="Kikuchi H."/>
            <person name="Masuho Y."/>
            <person name="Yamashita R."/>
            <person name="Nakai K."/>
            <person name="Yada T."/>
            <person name="Nakamura Y."/>
            <person name="Ohara O."/>
            <person name="Isogai T."/>
            <person name="Sugano S."/>
        </authorList>
    </citation>
    <scope>NUCLEOTIDE SEQUENCE [LARGE SCALE MRNA] OF 1075-2579 (ISOFORM 2)</scope>
    <source>
        <tissue>Placenta</tissue>
    </source>
</reference>
<reference key="4">
    <citation type="journal article" date="2004" name="Genome Res.">
        <title>The status, quality, and expansion of the NIH full-length cDNA project: the Mammalian Gene Collection (MGC).</title>
        <authorList>
            <consortium name="The MGC Project Team"/>
        </authorList>
    </citation>
    <scope>NUCLEOTIDE SEQUENCE [LARGE SCALE MRNA] OF 1124-2579 (ISOFORM 2)</scope>
</reference>
<reference key="5">
    <citation type="journal article" date="2010" name="Cell">
        <title>C. elegans screen identifies autophagy genes specific to multicellular organisms.</title>
        <authorList>
            <person name="Tian Y."/>
            <person name="Li Z."/>
            <person name="Hu W."/>
            <person name="Ren H."/>
            <person name="Tian E."/>
            <person name="Zhao Y."/>
            <person name="Lu Q."/>
            <person name="Huang X."/>
            <person name="Yang P."/>
            <person name="Li X."/>
            <person name="Wang X."/>
            <person name="Kovacs A.L."/>
            <person name="Yu L."/>
            <person name="Zhang H."/>
        </authorList>
    </citation>
    <scope>FUNCTION</scope>
</reference>
<reference key="6">
    <citation type="journal article" date="2013" name="J. Proteome Res.">
        <title>Toward a comprehensive characterization of a human cancer cell phosphoproteome.</title>
        <authorList>
            <person name="Zhou H."/>
            <person name="Di Palma S."/>
            <person name="Preisinger C."/>
            <person name="Peng M."/>
            <person name="Polat A.N."/>
            <person name="Heck A.J."/>
            <person name="Mohammed S."/>
        </authorList>
    </citation>
    <scope>PHOSPHORYLATION [LARGE SCALE ANALYSIS] AT THR-134</scope>
    <scope>IDENTIFICATION BY MASS SPECTROMETRY [LARGE SCALE ANALYSIS]</scope>
    <source>
        <tissue>Cervix carcinoma</tissue>
        <tissue>Erythroleukemia</tissue>
    </source>
</reference>
<reference key="7">
    <citation type="journal article" date="2018" name="Autophagy">
        <title>The Vici syndrome protein EPG5 regulates intracellular nucleic acid trafficking linking autophagy to innate and adaptive immunity.</title>
        <authorList>
            <person name="Piano Mortari E."/>
            <person name="Folgiero V."/>
            <person name="Marcellini V."/>
            <person name="Romania P."/>
            <person name="Bellacchio E."/>
            <person name="D'Alicandro V."/>
            <person name="Bocci C."/>
            <person name="Carrozzo R."/>
            <person name="Martinelli D."/>
            <person name="Petrini S."/>
            <person name="Axiotis E."/>
            <person name="Farroni C."/>
            <person name="Locatelli F."/>
            <person name="Schara U."/>
            <person name="Pilz D.T."/>
            <person name="Jungbluth H."/>
            <person name="Dionisi-Vici C."/>
            <person name="Carsetti R."/>
        </authorList>
    </citation>
    <scope>FUNCTION</scope>
    <scope>SUBCELLULAR LOCATION</scope>
    <scope>INTERACTION WITH RAN</scope>
    <scope>VARIANTS VICIS 299-ARG--ARG-2579 DEL AND ALA-1827</scope>
</reference>
<reference key="8">
    <citation type="journal article" date="2006" name="Science">
        <title>The consensus coding sequences of human breast and colorectal cancers.</title>
        <authorList>
            <person name="Sjoeblom T."/>
            <person name="Jones S."/>
            <person name="Wood L.D."/>
            <person name="Parsons D.W."/>
            <person name="Lin J."/>
            <person name="Barber T.D."/>
            <person name="Mandelker D."/>
            <person name="Leary R.J."/>
            <person name="Ptak J."/>
            <person name="Silliman N."/>
            <person name="Szabo S."/>
            <person name="Buckhaults P."/>
            <person name="Farrell C."/>
            <person name="Meeh P."/>
            <person name="Markowitz S.D."/>
            <person name="Willis J."/>
            <person name="Dawson D."/>
            <person name="Willson J.K.V."/>
            <person name="Gazdar A.F."/>
            <person name="Hartigan J."/>
            <person name="Wu L."/>
            <person name="Liu C."/>
            <person name="Parmigiani G."/>
            <person name="Park B.H."/>
            <person name="Bachman K.E."/>
            <person name="Papadopoulos N."/>
            <person name="Vogelstein B."/>
            <person name="Kinzler K.W."/>
            <person name="Velculescu V.E."/>
        </authorList>
    </citation>
    <scope>VARIANTS [LARGE SCALE ANALYSIS] THR-1511; TYR-1865 AND TRP-2056</scope>
</reference>
<reference key="9">
    <citation type="journal article" date="2013" name="Nat. Genet.">
        <title>Recessive mutations in EPG5 cause Vici syndrome, a multisystem disorder with defective autophagy.</title>
        <authorList>
            <person name="Cullup T."/>
            <person name="Kho A.L."/>
            <person name="Dionisi-Vici C."/>
            <person name="Brandmeier B."/>
            <person name="Smith F."/>
            <person name="Urry Z."/>
            <person name="Simpson M.A."/>
            <person name="Yau S."/>
            <person name="Bertini E."/>
            <person name="McClelland V."/>
            <person name="Al-Owain M."/>
            <person name="Koelker S."/>
            <person name="Koerner C."/>
            <person name="Hoffmann G.F."/>
            <person name="Wijburg F.A."/>
            <person name="ten Hoedt A.E."/>
            <person name="Rogers R.C."/>
            <person name="Manchester D."/>
            <person name="Miyata R."/>
            <person name="Hayashi M."/>
            <person name="Said E."/>
            <person name="Soler D."/>
            <person name="Kroisel P.M."/>
            <person name="Windpassinger C."/>
            <person name="Filloux F.M."/>
            <person name="Al-Kaabi S."/>
            <person name="Hertecant J."/>
            <person name="Del Campo M."/>
            <person name="Buk S."/>
            <person name="Bodi I."/>
            <person name="Goebel H.H."/>
            <person name="Sewry C.A."/>
            <person name="Abbs S."/>
            <person name="Mohammed S."/>
            <person name="Josifova D."/>
            <person name="Gautel M."/>
            <person name="Jungbluth H."/>
        </authorList>
    </citation>
    <scope>VARIANTS VICIS ARG-336; PRO-457; PRO-784; 859-GLU--ARG-2579 DEL; 1161-ARG--ARG-2579 DEL; 1530-GLN--ARG-2579 DEL; 1584-LEU--ARG-2579 DEL; 1595-GLN--ARG-2579 DEL; 1945-CYS--ARG-2579 DEL; ARG-2038 AND 2078-ARG--ARG-2579 DEL</scope>
    <scope>FUNCTION</scope>
    <scope>INVOLVEMENT IN VICIS</scope>
</reference>
<reference key="10">
    <citation type="journal article" date="2014" name="Am. J. Med. Genet. A">
        <title>First description of a patient with Vici syndrome due to a mutation affecting the penultimate exon of EPG5 and review of the literature.</title>
        <authorList>
            <person name="Ehmke N."/>
            <person name="Parvaneh N."/>
            <person name="Krawitz P."/>
            <person name="Ashrafi M.R."/>
            <person name="Karimi P."/>
            <person name="Mehdizadeh M."/>
            <person name="Krueger U."/>
            <person name="Hecht J."/>
            <person name="Mundlos S."/>
            <person name="Robinson P.N."/>
        </authorList>
    </citation>
    <scope>VARIANT VICIS 2483-ARG--ARG-2579 DEL</scope>
</reference>
<reference key="11">
    <citation type="journal article" date="2016" name="Brain">
        <title>EPG5-related Vici syndrome: a paradigm of neurodevelopmental disorders with defective autophagy.</title>
        <authorList>
            <person name="Byrne S."/>
            <person name="Jansen L."/>
            <person name="U-King-Im J.M."/>
            <person name="Siddiqui A."/>
            <person name="Lidov H.G."/>
            <person name="Bodi I."/>
            <person name="Smith L."/>
            <person name="Mein R."/>
            <person name="Cullup T."/>
            <person name="Dionisi-Vici C."/>
            <person name="Al-Gazali L."/>
            <person name="Al-Owain M."/>
            <person name="Bruwer Z."/>
            <person name="Al Thihli K."/>
            <person name="El-Garhy R."/>
            <person name="Flanigan K.M."/>
            <person name="Manickam K."/>
            <person name="Zmuda E."/>
            <person name="Banks W."/>
            <person name="Gershoni-Baruch R."/>
            <person name="Mandel H."/>
            <person name="Dagan E."/>
            <person name="Raas-Rothschild A."/>
            <person name="Barash H."/>
            <person name="Filloux F."/>
            <person name="Creel D."/>
            <person name="Harris M."/>
            <person name="Hamosh A."/>
            <person name="Koelker S."/>
            <person name="Ebrahimi-Fakhari D."/>
            <person name="Hoffmann G.F."/>
            <person name="Manchester D."/>
            <person name="Boyer P.J."/>
            <person name="Manzur A.Y."/>
            <person name="Lourenco C.M."/>
            <person name="Pilz D.T."/>
            <person name="Kamath A."/>
            <person name="Prabhakar P."/>
            <person name="Rao V.K."/>
            <person name="Rogers R.C."/>
            <person name="Ryan M.M."/>
            <person name="Brown N.J."/>
            <person name="McLean C.A."/>
            <person name="Said E."/>
            <person name="Schara U."/>
            <person name="Stein A."/>
            <person name="Sewry C."/>
            <person name="Travan L."/>
            <person name="Wijburg F.A."/>
            <person name="Zenker M."/>
            <person name="Mohammed S."/>
            <person name="Fanto M."/>
            <person name="Gautel M."/>
            <person name="Jungbluth H."/>
        </authorList>
    </citation>
    <scope>VARIANTS VICIS 46-GLN--ARG-2579 DEL; ARG-336; 417-ARG--ARG-2579 DEL; 1161-ARG--ARG-2579 DEL; 1989-TRP--ARG-2579 DEL; 1998-SER--ARG-2579 DEL; 2028-TRP--ARG-2579 DEL; PRO-2092; LYS-2414; 2445-ARG--ARG-2579 DEL AND 2483-ARG--ARG-2579 DEL</scope>
</reference>
<reference key="12">
    <citation type="journal article" date="2016" name="Brain">
        <title>Aberrant splicing induced by the most common EPG5 mutation in an individual with Vici syndrome.</title>
        <authorList>
            <person name="Kane M.S."/>
            <person name="Vilboux T."/>
            <person name="Wolfe L.A."/>
            <person name="Lee P.R."/>
            <person name="Wang Y."/>
            <person name="Huddleston K.C."/>
            <person name="Vockley J.G."/>
            <person name="Niederhuber J.E."/>
            <person name="Solomon B.D."/>
        </authorList>
    </citation>
    <scope>CHARACTERIZATION OF VARIANT VICIS ARG-336</scope>
</reference>
<reference key="13">
    <citation type="journal article" date="2017" name="Am. J. Med. Genet. A">
        <title>Prenatal and postnatal presentations of corpus callosum agenesis with polymicrogyria caused by EGP5 mutation.</title>
        <authorList>
            <person name="Maillard C."/>
            <person name="Cavallin M."/>
            <person name="Piquand K."/>
            <person name="Philbert M."/>
            <person name="Bault J.P."/>
            <person name="Millischer A.E."/>
            <person name="Moshous D."/>
            <person name="Rio M."/>
            <person name="Gitiaux C."/>
            <person name="Boddaert N."/>
            <person name="Masson C."/>
            <person name="Thomas S."/>
            <person name="Bahi-Buisson N."/>
        </authorList>
    </citation>
    <scope>VARIANT VICIS GLU-1336</scope>
</reference>
<accession>Q9HCE0</accession>
<accession>A2BDF3</accession>
<accession>Q9H8C8</accession>
<comment type="function">
    <text evidence="5 6 11">Involved in autophagy. May play a role in a late step of autophagy, such as clearance of autophagosomal cargo. Plays a key role in innate and adaptive immune response triggered by unmethylated cytidine-phosphate-guanosine (CpG) dinucleotides from pathogens, and mediated by the nucleotide-sensing receptor TLR9. It is necessary for the translocation of CpG dinucleotides from early endosomes to late endosomes and lysosomes, where TLR9 is located (PubMed:29130391).</text>
</comment>
<comment type="subunit">
    <text evidence="11">Interacts with RAN.</text>
</comment>
<comment type="subcellular location">
    <subcellularLocation>
        <location evidence="11">Cytoplasm</location>
        <location evidence="11">Perinuclear region</location>
    </subcellularLocation>
    <subcellularLocation>
        <location evidence="11">Lysosome</location>
    </subcellularLocation>
</comment>
<comment type="alternative products">
    <event type="alternative splicing"/>
    <isoform>
        <id>Q9HCE0-1</id>
        <name>1</name>
        <sequence type="displayed"/>
    </isoform>
    <isoform>
        <id>Q9HCE0-2</id>
        <name>2</name>
        <sequence type="described" ref="VSP_028435"/>
    </isoform>
</comment>
<comment type="disease" evidence="6 7 8 9 10 11">
    <disease id="DI-03646">
        <name>Vici syndrome</name>
        <acronym>VICIS</acronym>
        <description>A rare congenital multisystem disorder characterized by agenesis of the corpus callosum, cataracts, pigmentary defects, progressive cardiomyopathy, and variable immunodeficiency. Affected individuals also have profound psychomotor retardation and hypotonia due to a myopathy.</description>
        <dbReference type="MIM" id="242840"/>
    </disease>
    <text evidence="6">The disease is caused by variants affecting the gene represented in this entry. Affected individuals show homozygosity or compound heterozygosity for truncating mutations, aberrant splicing and/or missense mutations. Parental studies suggest recessive inheritance with no carrier manifestation (PubMed:23222957).</text>
</comment>
<comment type="similarity">
    <text evidence="14">Belongs to the EPG5 family.</text>
</comment>
<comment type="sequence caution" evidence="14">
    <conflict type="erroneous initiation">
        <sequence resource="EMBL-CDS" id="BAB13458"/>
    </conflict>
    <text>Extended N-terminus.</text>
</comment>
<comment type="sequence caution" evidence="14">
    <conflict type="erroneous termination">
        <sequence resource="EMBL-CDS" id="BAB14689"/>
    </conflict>
    <text>Truncated C-terminus.</text>
</comment>
<name>EPG5_HUMAN</name>
<evidence type="ECO:0000255" key="1"/>
<evidence type="ECO:0000256" key="2">
    <source>
        <dbReference type="SAM" id="MobiDB-lite"/>
    </source>
</evidence>
<evidence type="ECO:0000269" key="3">
    <source>
    </source>
</evidence>
<evidence type="ECO:0000269" key="4">
    <source>
    </source>
</evidence>
<evidence type="ECO:0000269" key="5">
    <source>
    </source>
</evidence>
<evidence type="ECO:0000269" key="6">
    <source>
    </source>
</evidence>
<evidence type="ECO:0000269" key="7">
    <source>
    </source>
</evidence>
<evidence type="ECO:0000269" key="8">
    <source>
    </source>
</evidence>
<evidence type="ECO:0000269" key="9">
    <source>
    </source>
</evidence>
<evidence type="ECO:0000269" key="10">
    <source>
    </source>
</evidence>
<evidence type="ECO:0000269" key="11">
    <source>
    </source>
</evidence>
<evidence type="ECO:0000303" key="12">
    <source>
    </source>
</evidence>
<evidence type="ECO:0000303" key="13">
    <source>
    </source>
</evidence>
<evidence type="ECO:0000305" key="14"/>
<evidence type="ECO:0007744" key="15">
    <source>
    </source>
</evidence>
<feature type="chain" id="PRO_0000306255" description="Ectopic P granules protein 5 homolog">
    <location>
        <begin position="1"/>
        <end position="2579"/>
    </location>
</feature>
<feature type="region of interest" description="Disordered" evidence="2">
    <location>
        <begin position="1"/>
        <end position="46"/>
    </location>
</feature>
<feature type="region of interest" description="Disordered" evidence="2">
    <location>
        <begin position="92"/>
        <end position="132"/>
    </location>
</feature>
<feature type="region of interest" description="Disordered" evidence="2">
    <location>
        <begin position="535"/>
        <end position="564"/>
    </location>
</feature>
<feature type="coiled-coil region" evidence="1">
    <location>
        <begin position="1607"/>
        <end position="1633"/>
    </location>
</feature>
<feature type="compositionally biased region" description="Basic residues" evidence="2">
    <location>
        <begin position="7"/>
        <end position="23"/>
    </location>
</feature>
<feature type="compositionally biased region" description="Basic and acidic residues" evidence="2">
    <location>
        <begin position="24"/>
        <end position="34"/>
    </location>
</feature>
<feature type="compositionally biased region" description="Acidic residues" evidence="2">
    <location>
        <begin position="555"/>
        <end position="564"/>
    </location>
</feature>
<feature type="modified residue" description="Phosphothreonine" evidence="15">
    <location>
        <position position="134"/>
    </location>
</feature>
<feature type="splice variant" id="VSP_028435" description="In isoform 2." evidence="12 13">
    <location>
        <begin position="2482"/>
        <end position="2579"/>
    </location>
</feature>
<feature type="sequence variant" id="VAR_081369" description="In VICIS." evidence="8">
    <location>
        <begin position="46"/>
        <end position="2579"/>
    </location>
</feature>
<feature type="sequence variant" id="VAR_062210" description="In dbSNP:rs59422275." evidence="3">
    <original>K</original>
    <variation>E</variation>
    <location>
        <position position="182"/>
    </location>
</feature>
<feature type="sequence variant" id="VAR_081370" description="In VICIS." evidence="11">
    <location>
        <begin position="299"/>
        <end position="2579"/>
    </location>
</feature>
<feature type="sequence variant" id="VAR_069224" description="In VICIS; relatively mild phenotype characterized by absence or later onset of cardiac or immunologic features; a normally spliced transcript with the missense variant and multiple misspliced transcripts are detected in patient cells; results in 50% decrease of mRNA levels in patient cells most probably due to nonsense-mediated decay of misspliced transcripts; dbSNP:rs201757275." evidence="6 8 9">
    <original>Q</original>
    <variation>R</variation>
    <location>
        <position position="336"/>
    </location>
</feature>
<feature type="sequence variant" id="VAR_081371" description="In VICIS." evidence="8">
    <location>
        <begin position="417"/>
        <end position="2579"/>
    </location>
</feature>
<feature type="sequence variant" id="VAR_081372" description="In VICIS; uncertain significance; associated in cis with P-784; dbSNP:rs746862679." evidence="6">
    <original>L</original>
    <variation>P</variation>
    <location>
        <position position="457"/>
    </location>
</feature>
<feature type="sequence variant" id="VAR_081373" description="In VICIS; uncertain significance; associated in cis with P-457; dbSNP:rs754795342." evidence="6">
    <original>Q</original>
    <variation>P</variation>
    <location>
        <position position="784"/>
    </location>
</feature>
<feature type="sequence variant" id="VAR_035278" description="In dbSNP:rs3744999.">
    <original>E</original>
    <variation>D</variation>
    <location>
        <position position="844"/>
    </location>
</feature>
<feature type="sequence variant" id="VAR_081374" description="In VICIS." evidence="6">
    <location>
        <begin position="859"/>
        <end position="2579"/>
    </location>
</feature>
<feature type="sequence variant" id="VAR_035279" description="In dbSNP:rs3744998.">
    <original>V</original>
    <variation>A</variation>
    <location>
        <position position="1058"/>
    </location>
</feature>
<feature type="sequence variant" id="VAR_035280" description="In dbSNP:rs3744997.">
    <original>I</original>
    <variation>V</variation>
    <location>
        <position position="1131"/>
    </location>
</feature>
<feature type="sequence variant" id="VAR_081375" description="In VICIS." evidence="6 8">
    <location>
        <begin position="1161"/>
        <end position="2579"/>
    </location>
</feature>
<feature type="sequence variant" id="VAR_081376" description="In VICIS; uncertain significance; dbSNP:rs1085308061." evidence="10">
    <original>G</original>
    <variation>E</variation>
    <location>
        <position position="1336"/>
    </location>
</feature>
<feature type="sequence variant" id="VAR_036525" description="In a breast cancer sample; somatic mutation; dbSNP:rs2049605091." evidence="4">
    <original>A</original>
    <variation>T</variation>
    <location>
        <position position="1511"/>
    </location>
</feature>
<feature type="sequence variant" id="VAR_035281" description="In dbSNP:rs1893523.">
    <original>A</original>
    <variation>V</variation>
    <location>
        <position position="1511"/>
    </location>
</feature>
<feature type="sequence variant" id="VAR_081377" description="In VICIS." evidence="6">
    <location>
        <begin position="1530"/>
        <end position="2579"/>
    </location>
</feature>
<feature type="sequence variant" id="VAR_081378" description="In VICIS." evidence="6">
    <location>
        <begin position="1584"/>
        <end position="2579"/>
    </location>
</feature>
<feature type="sequence variant" id="VAR_081379" description="In VICIS." evidence="6">
    <location>
        <begin position="1595"/>
        <end position="2579"/>
    </location>
</feature>
<feature type="sequence variant" id="VAR_081380" description="In VICIS; dbSNP:rs1568118775." evidence="11">
    <original>P</original>
    <variation>A</variation>
    <location>
        <position position="1827"/>
    </location>
</feature>
<feature type="sequence variant" id="VAR_035282" description="In dbSNP:rs34064739.">
    <original>S</original>
    <variation>N</variation>
    <location>
        <position position="1864"/>
    </location>
</feature>
<feature type="sequence variant" id="VAR_036526" description="In a breast cancer sample; somatic mutation; dbSNP:rs1272061911." evidence="4">
    <original>C</original>
    <variation>Y</variation>
    <location>
        <position position="1865"/>
    </location>
</feature>
<feature type="sequence variant" id="VAR_081381" description="In VICIS." evidence="6">
    <location>
        <begin position="1945"/>
        <end position="2579"/>
    </location>
</feature>
<feature type="sequence variant" id="VAR_035283" description="In dbSNP:rs34674177.">
    <original>R</original>
    <variation>Q</variation>
    <location>
        <position position="1985"/>
    </location>
</feature>
<feature type="sequence variant" id="VAR_081382" description="In VICIS." evidence="8">
    <location>
        <begin position="1989"/>
        <end position="2579"/>
    </location>
</feature>
<feature type="sequence variant" id="VAR_081383" description="In VICIS." evidence="8">
    <location>
        <begin position="1998"/>
        <end position="2579"/>
    </location>
</feature>
<feature type="sequence variant" id="VAR_081384" description="In VICIS." evidence="8">
    <location>
        <begin position="2028"/>
        <end position="2579"/>
    </location>
</feature>
<feature type="sequence variant" id="VAR_081385" description="In VICIS; uncertain significance; dbSNP:rs375057925." evidence="6">
    <original>C</original>
    <variation>R</variation>
    <location>
        <position position="2038"/>
    </location>
</feature>
<feature type="sequence variant" id="VAR_036527" description="In a breast cancer sample; somatic mutation; dbSNP:rs116076204." evidence="4">
    <original>R</original>
    <variation>W</variation>
    <location>
        <position position="2056"/>
    </location>
</feature>
<feature type="sequence variant" id="VAR_081386" description="In VICIS." evidence="6">
    <location>
        <begin position="2078"/>
        <end position="2579"/>
    </location>
</feature>
<feature type="sequence variant" id="VAR_081387" description="In VICIS; uncertain significance; dbSNP:rs1568104317." evidence="8">
    <original>L</original>
    <variation>P</variation>
    <location>
        <position position="2092"/>
    </location>
</feature>
<feature type="sequence variant" id="VAR_081388" description="In VICIS; uncertain significance; dbSNP:rs1568094451." evidence="8">
    <original>E</original>
    <variation>K</variation>
    <location>
        <position position="2414"/>
    </location>
</feature>
<feature type="sequence variant" id="VAR_081389" description="In VICIS." evidence="8">
    <location>
        <begin position="2445"/>
        <end position="2579"/>
    </location>
</feature>
<feature type="sequence variant" id="VAR_081390" description="In VICIS." evidence="7 8">
    <location>
        <begin position="2483"/>
        <end position="2579"/>
    </location>
</feature>
<feature type="sequence conflict" description="In Ref. 3; BAB14689." evidence="14" ref="3">
    <original>C</original>
    <variation>R</variation>
    <location>
        <position position="1201"/>
    </location>
</feature>
<feature type="sequence conflict" description="In Ref. 3; BAB14689." evidence="14" ref="3">
    <original>A</original>
    <variation>V</variation>
    <location>
        <position position="1369"/>
    </location>
</feature>
<feature type="sequence conflict" description="In Ref. 2; BAB13458." evidence="14" ref="2">
    <original>DLW</original>
    <variation>VKL</variation>
    <location>
        <begin position="1444"/>
        <end position="1446"/>
    </location>
</feature>
<feature type="sequence conflict" description="In Ref. 3; BAB14689." evidence="14" ref="3">
    <original>S</original>
    <variation>T</variation>
    <location>
        <position position="1711"/>
    </location>
</feature>
<feature type="sequence conflict" description="In Ref. 3; BAB14689." evidence="14" ref="3">
    <original>W</original>
    <variation>S</variation>
    <location>
        <position position="2295"/>
    </location>
</feature>